<accession>P9WJN6</accession>
<accession>L0T7N6</accession>
<accession>O33225</accession>
<accession>P65441</accession>
<evidence type="ECO:0000255" key="1">
    <source>
        <dbReference type="HAMAP-Rule" id="MF_02040"/>
    </source>
</evidence>
<evidence type="ECO:0000305" key="2"/>
<gene>
    <name type="primary">mrp</name>
    <name type="ordered locus">MT1267</name>
</gene>
<proteinExistence type="inferred from homology"/>
<name>APBC_MYCTO</name>
<organism>
    <name type="scientific">Mycobacterium tuberculosis (strain CDC 1551 / Oshkosh)</name>
    <dbReference type="NCBI Taxonomy" id="83331"/>
    <lineage>
        <taxon>Bacteria</taxon>
        <taxon>Bacillati</taxon>
        <taxon>Actinomycetota</taxon>
        <taxon>Actinomycetes</taxon>
        <taxon>Mycobacteriales</taxon>
        <taxon>Mycobacteriaceae</taxon>
        <taxon>Mycobacterium</taxon>
        <taxon>Mycobacterium tuberculosis complex</taxon>
    </lineage>
</organism>
<reference key="1">
    <citation type="journal article" date="2002" name="J. Bacteriol.">
        <title>Whole-genome comparison of Mycobacterium tuberculosis clinical and laboratory strains.</title>
        <authorList>
            <person name="Fleischmann R.D."/>
            <person name="Alland D."/>
            <person name="Eisen J.A."/>
            <person name="Carpenter L."/>
            <person name="White O."/>
            <person name="Peterson J.D."/>
            <person name="DeBoy R.T."/>
            <person name="Dodson R.J."/>
            <person name="Gwinn M.L."/>
            <person name="Haft D.H."/>
            <person name="Hickey E.K."/>
            <person name="Kolonay J.F."/>
            <person name="Nelson W.C."/>
            <person name="Umayam L.A."/>
            <person name="Ermolaeva M.D."/>
            <person name="Salzberg S.L."/>
            <person name="Delcher A."/>
            <person name="Utterback T.R."/>
            <person name="Weidman J.F."/>
            <person name="Khouri H.M."/>
            <person name="Gill J."/>
            <person name="Mikula A."/>
            <person name="Bishai W."/>
            <person name="Jacobs W.R. Jr."/>
            <person name="Venter J.C."/>
            <person name="Fraser C.M."/>
        </authorList>
    </citation>
    <scope>NUCLEOTIDE SEQUENCE [LARGE SCALE GENOMIC DNA]</scope>
    <source>
        <strain>CDC 1551 / Oshkosh</strain>
    </source>
</reference>
<protein>
    <recommendedName>
        <fullName evidence="1">Iron-sulfur cluster carrier protein</fullName>
    </recommendedName>
</protein>
<feature type="chain" id="PRO_0000427797" description="Iron-sulfur cluster carrier protein">
    <location>
        <begin position="1"/>
        <end position="381"/>
    </location>
</feature>
<feature type="binding site" evidence="1">
    <location>
        <begin position="125"/>
        <end position="132"/>
    </location>
    <ligand>
        <name>ATP</name>
        <dbReference type="ChEBI" id="CHEBI:30616"/>
    </ligand>
</feature>
<sequence>MSGTRDGDLNAAIRTALGKVIDPELRRPITELGMVKSIDTGPDGSVHVEIYLTIAGCPKKSEITERVTRAVADVPGTSAVRVSLDVMSDEQRTELRKQLRGDTREPVIPFAQPDSLTRVYAVASGKGGVGKSTVTVNLAAAMAVRGLSIGVLDADIHGHSIPRMMGTTDRPTQVESMILPPIAHQVKVISIAQFTQGNTPVVWRGPMLHRALQQFLADVYWGDLDVLLLDLPPGTGDVAISVAQLIPNAELLVVTTPQLAAAEVAERAGSIALQTRQRIVGVVENMSGLTLPDGTTMQVFGEGGGRLVAERLSRAVGADVPLLGQIPLDPALVAAGDSGVPLVLSSPDSAIGKELHSIADGLSTRRRGLAGMSLGLDPTRR</sequence>
<keyword id="KW-0067">ATP-binding</keyword>
<keyword id="KW-0378">Hydrolase</keyword>
<keyword id="KW-0408">Iron</keyword>
<keyword id="KW-0411">Iron-sulfur</keyword>
<keyword id="KW-0479">Metal-binding</keyword>
<keyword id="KW-0547">Nucleotide-binding</keyword>
<keyword id="KW-1185">Reference proteome</keyword>
<dbReference type="EMBL" id="AE000516">
    <property type="protein sequence ID" value="AAK45525.1"/>
    <property type="status" value="ALT_INIT"/>
    <property type="molecule type" value="Genomic_DNA"/>
</dbReference>
<dbReference type="PIR" id="H70508">
    <property type="entry name" value="H70508"/>
</dbReference>
<dbReference type="SMR" id="P9WJN6"/>
<dbReference type="KEGG" id="mtc:MT1267"/>
<dbReference type="HOGENOM" id="CLU_024839_0_0_11"/>
<dbReference type="Proteomes" id="UP000001020">
    <property type="component" value="Chromosome"/>
</dbReference>
<dbReference type="GO" id="GO:0051539">
    <property type="term" value="F:4 iron, 4 sulfur cluster binding"/>
    <property type="evidence" value="ECO:0007669"/>
    <property type="project" value="TreeGrafter"/>
</dbReference>
<dbReference type="GO" id="GO:0005524">
    <property type="term" value="F:ATP binding"/>
    <property type="evidence" value="ECO:0007669"/>
    <property type="project" value="UniProtKB-UniRule"/>
</dbReference>
<dbReference type="GO" id="GO:0016887">
    <property type="term" value="F:ATP hydrolysis activity"/>
    <property type="evidence" value="ECO:0007669"/>
    <property type="project" value="UniProtKB-UniRule"/>
</dbReference>
<dbReference type="GO" id="GO:0140663">
    <property type="term" value="F:ATP-dependent FeS chaperone activity"/>
    <property type="evidence" value="ECO:0007669"/>
    <property type="project" value="InterPro"/>
</dbReference>
<dbReference type="GO" id="GO:0046872">
    <property type="term" value="F:metal ion binding"/>
    <property type="evidence" value="ECO:0007669"/>
    <property type="project" value="UniProtKB-KW"/>
</dbReference>
<dbReference type="GO" id="GO:0016226">
    <property type="term" value="P:iron-sulfur cluster assembly"/>
    <property type="evidence" value="ECO:0007669"/>
    <property type="project" value="InterPro"/>
</dbReference>
<dbReference type="CDD" id="cd02037">
    <property type="entry name" value="Mrp_NBP35"/>
    <property type="match status" value="1"/>
</dbReference>
<dbReference type="FunFam" id="3.40.50.300:FF:000304">
    <property type="entry name" value="Iron-sulfur cluster carrier protein"/>
    <property type="match status" value="1"/>
</dbReference>
<dbReference type="Gene3D" id="3.30.300.130">
    <property type="entry name" value="Fe-S cluster assembly (FSCA)"/>
    <property type="match status" value="1"/>
</dbReference>
<dbReference type="Gene3D" id="3.40.50.300">
    <property type="entry name" value="P-loop containing nucleotide triphosphate hydrolases"/>
    <property type="match status" value="1"/>
</dbReference>
<dbReference type="HAMAP" id="MF_02040">
    <property type="entry name" value="Mrp_NBP35"/>
    <property type="match status" value="1"/>
</dbReference>
<dbReference type="InterPro" id="IPR034904">
    <property type="entry name" value="FSCA_dom_sf"/>
</dbReference>
<dbReference type="InterPro" id="IPR002744">
    <property type="entry name" value="MIP18-like"/>
</dbReference>
<dbReference type="InterPro" id="IPR000808">
    <property type="entry name" value="Mrp-like_CS"/>
</dbReference>
<dbReference type="InterPro" id="IPR019591">
    <property type="entry name" value="Mrp/NBP35_ATP-bd"/>
</dbReference>
<dbReference type="InterPro" id="IPR044304">
    <property type="entry name" value="NUBPL-like"/>
</dbReference>
<dbReference type="InterPro" id="IPR027417">
    <property type="entry name" value="P-loop_NTPase"/>
</dbReference>
<dbReference type="InterPro" id="IPR033756">
    <property type="entry name" value="YlxH/NBP35"/>
</dbReference>
<dbReference type="PANTHER" id="PTHR42961">
    <property type="entry name" value="IRON-SULFUR PROTEIN NUBPL"/>
    <property type="match status" value="1"/>
</dbReference>
<dbReference type="PANTHER" id="PTHR42961:SF2">
    <property type="entry name" value="IRON-SULFUR PROTEIN NUBPL"/>
    <property type="match status" value="1"/>
</dbReference>
<dbReference type="Pfam" id="PF01883">
    <property type="entry name" value="FeS_assembly_P"/>
    <property type="match status" value="1"/>
</dbReference>
<dbReference type="Pfam" id="PF10609">
    <property type="entry name" value="ParA"/>
    <property type="match status" value="1"/>
</dbReference>
<dbReference type="SUPFAM" id="SSF117916">
    <property type="entry name" value="Fe-S cluster assembly (FSCA) domain-like"/>
    <property type="match status" value="1"/>
</dbReference>
<dbReference type="SUPFAM" id="SSF52540">
    <property type="entry name" value="P-loop containing nucleoside triphosphate hydrolases"/>
    <property type="match status" value="1"/>
</dbReference>
<dbReference type="PROSITE" id="PS01215">
    <property type="entry name" value="MRP"/>
    <property type="match status" value="1"/>
</dbReference>
<comment type="function">
    <text evidence="1">Binds and transfers iron-sulfur (Fe-S) clusters to target apoproteins. Can hydrolyze ATP.</text>
</comment>
<comment type="subunit">
    <text evidence="1">Homodimer.</text>
</comment>
<comment type="similarity">
    <text evidence="2">In the N-terminal section; belongs to the MIP18 family.</text>
</comment>
<comment type="similarity">
    <text evidence="2">In the C-terminal section; belongs to the Mrp/NBP35 ATP-binding proteins family.</text>
</comment>
<comment type="sequence caution" evidence="2">
    <conflict type="erroneous initiation">
        <sequence resource="EMBL-CDS" id="AAK45525"/>
    </conflict>
</comment>